<evidence type="ECO:0000250" key="1">
    <source>
        <dbReference type="UniProtKB" id="P51681"/>
    </source>
</evidence>
<evidence type="ECO:0000250" key="2">
    <source>
        <dbReference type="UniProtKB" id="Q9XT76"/>
    </source>
</evidence>
<evidence type="ECO:0000255" key="3"/>
<evidence type="ECO:0000255" key="4">
    <source>
        <dbReference type="PROSITE-ProRule" id="PRU00521"/>
    </source>
</evidence>
<protein>
    <recommendedName>
        <fullName>C-C chemokine receptor type 5</fullName>
        <shortName>C-C CKR-5</shortName>
        <shortName>CC-CKR-5</shortName>
        <shortName>CCR-5</shortName>
        <shortName>CCR5</shortName>
    </recommendedName>
    <cdAntigenName>CD195</cdAntigenName>
</protein>
<reference key="1">
    <citation type="journal article" date="1999" name="Mol. Biol. Evol.">
        <title>Sequence evolution of the CCR5 chemokine receptor gene in primates.</title>
        <authorList>
            <person name="Zhang Y.-W."/>
            <person name="Ryder O.A."/>
            <person name="Zhang Y.-P."/>
        </authorList>
    </citation>
    <scope>NUCLEOTIDE SEQUENCE [GENOMIC DNA]</scope>
</reference>
<dbReference type="EMBL" id="AF177877">
    <property type="protein sequence ID" value="AAK43360.1"/>
    <property type="molecule type" value="Genomic_DNA"/>
</dbReference>
<dbReference type="SMR" id="Q95ND1"/>
<dbReference type="GlyCosmos" id="Q95ND1">
    <property type="glycosylation" value="2 sites, No reported glycans"/>
</dbReference>
<dbReference type="GO" id="GO:0005737">
    <property type="term" value="C:cytoplasm"/>
    <property type="evidence" value="ECO:0007669"/>
    <property type="project" value="TreeGrafter"/>
</dbReference>
<dbReference type="GO" id="GO:0009897">
    <property type="term" value="C:external side of plasma membrane"/>
    <property type="evidence" value="ECO:0000250"/>
    <property type="project" value="UniProtKB"/>
</dbReference>
<dbReference type="GO" id="GO:0016493">
    <property type="term" value="F:C-C chemokine receptor activity"/>
    <property type="evidence" value="ECO:0000250"/>
    <property type="project" value="UniProtKB"/>
</dbReference>
<dbReference type="GO" id="GO:0071791">
    <property type="term" value="F:chemokine (C-C motif) ligand 5 binding"/>
    <property type="evidence" value="ECO:0007669"/>
    <property type="project" value="TreeGrafter"/>
</dbReference>
<dbReference type="GO" id="GO:0019722">
    <property type="term" value="P:calcium-mediated signaling"/>
    <property type="evidence" value="ECO:0007669"/>
    <property type="project" value="TreeGrafter"/>
</dbReference>
<dbReference type="GO" id="GO:0060326">
    <property type="term" value="P:cell chemotaxis"/>
    <property type="evidence" value="ECO:0007669"/>
    <property type="project" value="TreeGrafter"/>
</dbReference>
<dbReference type="GO" id="GO:0006955">
    <property type="term" value="P:immune response"/>
    <property type="evidence" value="ECO:0007669"/>
    <property type="project" value="InterPro"/>
</dbReference>
<dbReference type="GO" id="GO:0006954">
    <property type="term" value="P:inflammatory response"/>
    <property type="evidence" value="ECO:0007669"/>
    <property type="project" value="InterPro"/>
</dbReference>
<dbReference type="GO" id="GO:0007204">
    <property type="term" value="P:positive regulation of cytosolic calcium ion concentration"/>
    <property type="evidence" value="ECO:0007669"/>
    <property type="project" value="TreeGrafter"/>
</dbReference>
<dbReference type="CDD" id="cd15184">
    <property type="entry name" value="7tmA_CCR5_CCR2"/>
    <property type="match status" value="1"/>
</dbReference>
<dbReference type="FunFam" id="1.20.1070.10:FF:000026">
    <property type="entry name" value="C-C chemokine receptor type 5"/>
    <property type="match status" value="1"/>
</dbReference>
<dbReference type="Gene3D" id="1.20.1070.10">
    <property type="entry name" value="Rhodopsin 7-helix transmembrane proteins"/>
    <property type="match status" value="1"/>
</dbReference>
<dbReference type="InterPro" id="IPR050119">
    <property type="entry name" value="CCR1-9-like"/>
</dbReference>
<dbReference type="InterPro" id="IPR002240">
    <property type="entry name" value="Chemokine_CCR5"/>
</dbReference>
<dbReference type="InterPro" id="IPR000355">
    <property type="entry name" value="Chemokine_rcpt"/>
</dbReference>
<dbReference type="InterPro" id="IPR000276">
    <property type="entry name" value="GPCR_Rhodpsn"/>
</dbReference>
<dbReference type="InterPro" id="IPR017452">
    <property type="entry name" value="GPCR_Rhodpsn_7TM"/>
</dbReference>
<dbReference type="PANTHER" id="PTHR10489:SF686">
    <property type="entry name" value="C-C CHEMOKINE RECEPTOR TYPE 5"/>
    <property type="match status" value="1"/>
</dbReference>
<dbReference type="PANTHER" id="PTHR10489">
    <property type="entry name" value="CELL ADHESION MOLECULE"/>
    <property type="match status" value="1"/>
</dbReference>
<dbReference type="Pfam" id="PF00001">
    <property type="entry name" value="7tm_1"/>
    <property type="match status" value="1"/>
</dbReference>
<dbReference type="PRINTS" id="PR00657">
    <property type="entry name" value="CCCHEMOKINER"/>
</dbReference>
<dbReference type="PRINTS" id="PR01110">
    <property type="entry name" value="CHEMOKINER5"/>
</dbReference>
<dbReference type="PRINTS" id="PR00237">
    <property type="entry name" value="GPCRRHODOPSN"/>
</dbReference>
<dbReference type="SUPFAM" id="SSF81321">
    <property type="entry name" value="Family A G protein-coupled receptor-like"/>
    <property type="match status" value="1"/>
</dbReference>
<dbReference type="PROSITE" id="PS00237">
    <property type="entry name" value="G_PROTEIN_RECEP_F1_1"/>
    <property type="match status" value="1"/>
</dbReference>
<dbReference type="PROSITE" id="PS50262">
    <property type="entry name" value="G_PROTEIN_RECEP_F1_2"/>
    <property type="match status" value="1"/>
</dbReference>
<gene>
    <name type="primary">CCR5</name>
    <name type="synonym">CMKBR5</name>
</gene>
<comment type="function">
    <text evidence="1">Receptor for a number of inflammatory CC-chemokines including CCL3/MIP-1-alpha, CCL4/MIP-1-beta and RANTES and subsequently transduces a signal by increasing the intracellular calcium ion level. May play a role in the control of granulocytic lineage proliferation or differentiation. Participates in T-lymphocyte migration to the infection site by acting as a chemotactic receptor.</text>
</comment>
<comment type="subunit">
    <text evidence="1">Interacts with PRAF2. Efficient ligand binding to CCL3/MIP-1alpha and CCL4/MIP-1beta requires sulfation, O-glycosylation and sialic acid modifications. Glycosylation on Ser-6 is required for efficient binding of CCL4. Interacts with GRK2. Interacts with ARRB1 and ARRB2. Interacts with CNIH4. Interacts with S100A4; this interaction stimulates T-lymphocyte chemotaxis.</text>
</comment>
<comment type="subcellular location">
    <subcellularLocation>
        <location evidence="2">Cell membrane</location>
        <topology evidence="2">Multi-pass membrane protein</topology>
    </subcellularLocation>
</comment>
<comment type="PTM">
    <text evidence="1">Sulfated on at least 2 of the N-terminal tyrosines. Sulfation is required for efficient binding of the chemokines, CCL3 and CCL4 (By similarity).</text>
</comment>
<comment type="PTM">
    <text evidence="1">Palmitoylation in the C-terminal is important for cell surface expression.</text>
</comment>
<comment type="PTM">
    <text evidence="1">Phosphorylation on serine residues in the C-terminal is stimulated by binding CC chemokines especially by APO-RANTES.</text>
</comment>
<comment type="PTM">
    <text evidence="1">O-glycosylated, but not N-glycosylated. Ser-6 appears to be the major site even if Ser-7 may be also O-glycosylated. Also sialylated glycans present which contribute to chemokine binding. Thr-16 and Ser-17 may also be glycosylated and, if so, with small moieties such as a T-antigen.</text>
</comment>
<comment type="similarity">
    <text evidence="4">Belongs to the G-protein coupled receptor 1 family.</text>
</comment>
<keyword id="KW-1003">Cell membrane</keyword>
<keyword id="KW-1015">Disulfide bond</keyword>
<keyword id="KW-0297">G-protein coupled receptor</keyword>
<keyword id="KW-0325">Glycoprotein</keyword>
<keyword id="KW-0449">Lipoprotein</keyword>
<keyword id="KW-0472">Membrane</keyword>
<keyword id="KW-0564">Palmitate</keyword>
<keyword id="KW-0597">Phosphoprotein</keyword>
<keyword id="KW-0675">Receptor</keyword>
<keyword id="KW-0765">Sulfation</keyword>
<keyword id="KW-0807">Transducer</keyword>
<keyword id="KW-0812">Transmembrane</keyword>
<keyword id="KW-1133">Transmembrane helix</keyword>
<accession>Q95ND1</accession>
<feature type="chain" id="PRO_0000069267" description="C-C chemokine receptor type 5">
    <location>
        <begin position="1"/>
        <end position="352"/>
    </location>
</feature>
<feature type="topological domain" description="Extracellular" evidence="3">
    <location>
        <begin position="1"/>
        <end position="30"/>
    </location>
</feature>
<feature type="transmembrane region" description="Helical; Name=1" evidence="3">
    <location>
        <begin position="31"/>
        <end position="58"/>
    </location>
</feature>
<feature type="topological domain" description="Cytoplasmic" evidence="3">
    <location>
        <begin position="59"/>
        <end position="68"/>
    </location>
</feature>
<feature type="transmembrane region" description="Helical; Name=2" evidence="3">
    <location>
        <begin position="69"/>
        <end position="89"/>
    </location>
</feature>
<feature type="topological domain" description="Extracellular" evidence="3">
    <location>
        <begin position="90"/>
        <end position="102"/>
    </location>
</feature>
<feature type="transmembrane region" description="Helical; Name=3" evidence="3">
    <location>
        <begin position="103"/>
        <end position="124"/>
    </location>
</feature>
<feature type="topological domain" description="Cytoplasmic" evidence="3">
    <location>
        <begin position="125"/>
        <end position="141"/>
    </location>
</feature>
<feature type="transmembrane region" description="Helical; Name=4" evidence="3">
    <location>
        <begin position="142"/>
        <end position="166"/>
    </location>
</feature>
<feature type="topological domain" description="Extracellular" evidence="3">
    <location>
        <begin position="167"/>
        <end position="198"/>
    </location>
</feature>
<feature type="transmembrane region" description="Helical; Name=5" evidence="3">
    <location>
        <begin position="199"/>
        <end position="218"/>
    </location>
</feature>
<feature type="topological domain" description="Cytoplasmic" evidence="3">
    <location>
        <begin position="219"/>
        <end position="235"/>
    </location>
</feature>
<feature type="transmembrane region" description="Helical; Name=6" evidence="3">
    <location>
        <begin position="236"/>
        <end position="260"/>
    </location>
</feature>
<feature type="topological domain" description="Extracellular" evidence="3">
    <location>
        <begin position="261"/>
        <end position="277"/>
    </location>
</feature>
<feature type="transmembrane region" description="Helical; Name=7" evidence="3">
    <location>
        <begin position="278"/>
        <end position="301"/>
    </location>
</feature>
<feature type="topological domain" description="Cytoplasmic" evidence="3">
    <location>
        <begin position="302"/>
        <end position="352"/>
    </location>
</feature>
<feature type="modified residue" description="Sulfotyrosine" evidence="1">
    <location>
        <position position="3"/>
    </location>
</feature>
<feature type="modified residue" description="Sulfotyrosine" evidence="3">
    <location>
        <position position="10"/>
    </location>
</feature>
<feature type="modified residue" description="Sulfotyrosine" evidence="3">
    <location>
        <position position="14"/>
    </location>
</feature>
<feature type="modified residue" description="Sulfotyrosine" evidence="3">
    <location>
        <position position="15"/>
    </location>
</feature>
<feature type="modified residue" description="Phosphoserine; by BARK1" evidence="1">
    <location>
        <position position="336"/>
    </location>
</feature>
<feature type="modified residue" description="Phosphoserine; by BARK1" evidence="1">
    <location>
        <position position="337"/>
    </location>
</feature>
<feature type="modified residue" description="Phosphoserine; by BARK1" evidence="1">
    <location>
        <position position="342"/>
    </location>
</feature>
<feature type="modified residue" description="Phosphoserine; by BARK1" evidence="1">
    <location>
        <position position="349"/>
    </location>
</feature>
<feature type="lipid moiety-binding region" description="S-palmitoyl cysteine" evidence="1">
    <location>
        <position position="321"/>
    </location>
</feature>
<feature type="lipid moiety-binding region" description="S-palmitoyl cysteine" evidence="1">
    <location>
        <position position="323"/>
    </location>
</feature>
<feature type="lipid moiety-binding region" description="S-palmitoyl cysteine" evidence="1">
    <location>
        <position position="324"/>
    </location>
</feature>
<feature type="glycosylation site" description="O-linked (GalNAc...) serine" evidence="1">
    <location>
        <position position="6"/>
    </location>
</feature>
<feature type="glycosylation site" description="O-linked (GalNAc...) serine" evidence="1">
    <location>
        <position position="7"/>
    </location>
</feature>
<feature type="disulfide bond" evidence="1">
    <location>
        <begin position="20"/>
        <end position="269"/>
    </location>
</feature>
<feature type="disulfide bond" evidence="4">
    <location>
        <begin position="101"/>
        <end position="178"/>
    </location>
</feature>
<organism>
    <name type="scientific">Mandrillus sphinx</name>
    <name type="common">Mandrill</name>
    <name type="synonym">Papio sphinx</name>
    <dbReference type="NCBI Taxonomy" id="9561"/>
    <lineage>
        <taxon>Eukaryota</taxon>
        <taxon>Metazoa</taxon>
        <taxon>Chordata</taxon>
        <taxon>Craniata</taxon>
        <taxon>Vertebrata</taxon>
        <taxon>Euteleostomi</taxon>
        <taxon>Mammalia</taxon>
        <taxon>Eutheria</taxon>
        <taxon>Euarchontoglires</taxon>
        <taxon>Primates</taxon>
        <taxon>Haplorrhini</taxon>
        <taxon>Catarrhini</taxon>
        <taxon>Cercopithecidae</taxon>
        <taxon>Cercopithecinae</taxon>
        <taxon>Mandrillus</taxon>
    </lineage>
</organism>
<name>CCR5_MANSP</name>
<proteinExistence type="inferred from homology"/>
<sequence>MDYQVSSPTYDIDYYTSEPCQKINVKQIAAHLLPPLYSLVFIFGFVGNILVVLILINCKRLKSMTDIYLLNLAISDLLFLLTVPFWAHYAAAQWDFGNIMCQLLTGLYFIGFFSGIFFIILLTIDRYLAIVHAVFALKARTVTFGVVTSVITWVVAVFASLPGIIFTRSQREGLHYTCSSHFPYSQYQFWKNFRTLKIVILGLVLPLLVMVICYSGILKTLLRCRNEKKRHRAVRLIFTIMIVYFLFWAPYNIVLLLNTFQEFFGLNNCSSSNRLDQAMQVTETLGMTHCCINPIIYAFVGEKFRNYLLVFFQKHIAKRFCKCCSIFQQEAPERASSVYTRSTGEQEISVGL</sequence>